<comment type="function">
    <text evidence="1">Catalyzes the first intracellular reaction of sulfate assimilation, forming adenosine-5'-phosphosulfate (APS) from inorganic sulfate and ATP. Plays an important role in sulfate activation as a component of the biosynthesis pathway of sulfur-containing amino acids.</text>
</comment>
<comment type="catalytic activity">
    <reaction evidence="1">
        <text>sulfate + ATP + H(+) = adenosine 5'-phosphosulfate + diphosphate</text>
        <dbReference type="Rhea" id="RHEA:18133"/>
        <dbReference type="ChEBI" id="CHEBI:15378"/>
        <dbReference type="ChEBI" id="CHEBI:16189"/>
        <dbReference type="ChEBI" id="CHEBI:30616"/>
        <dbReference type="ChEBI" id="CHEBI:33019"/>
        <dbReference type="ChEBI" id="CHEBI:58243"/>
        <dbReference type="EC" id="2.7.7.4"/>
    </reaction>
</comment>
<comment type="activity regulation">
    <text evidence="1">Allosterically inhibited by 3'-phosphoadenosine 5'-phosphosulfate (PAPS).</text>
</comment>
<comment type="pathway">
    <text evidence="1">Sulfur metabolism; hydrogen sulfide biosynthesis; sulfite from sulfate: step 1/3.</text>
</comment>
<comment type="subunit">
    <text evidence="1">Homohexamer. Dimer of trimers.</text>
</comment>
<comment type="subcellular location">
    <subcellularLocation>
        <location evidence="1">Cytoplasm</location>
    </subcellularLocation>
</comment>
<comment type="domain">
    <text evidence="1">The adenylyl-sulfate kinase (APS kinase) is non-functional. It is involved in allosteric regulation by PAPS. PAPS binding induces a large rotational rearrangement of domains lowering the substrate affinity of the enzyme.</text>
</comment>
<comment type="similarity">
    <text evidence="1">In the N-terminal section; belongs to the sulfate adenylyltransferase family.</text>
</comment>
<comment type="similarity">
    <text evidence="1">In the C-terminal section; belongs to the APS kinase family.</text>
</comment>
<keyword id="KW-0021">Allosteric enzyme</keyword>
<keyword id="KW-0028">Amino-acid biosynthesis</keyword>
<keyword id="KW-0067">ATP-binding</keyword>
<keyword id="KW-0198">Cysteine biosynthesis</keyword>
<keyword id="KW-0963">Cytoplasm</keyword>
<keyword id="KW-0486">Methionine biosynthesis</keyword>
<keyword id="KW-0547">Nucleotide-binding</keyword>
<keyword id="KW-0548">Nucleotidyltransferase</keyword>
<keyword id="KW-1185">Reference proteome</keyword>
<keyword id="KW-0808">Transferase</keyword>
<protein>
    <recommendedName>
        <fullName evidence="1">Sulfate adenylyltransferase</fullName>
        <ecNumber evidence="1">2.7.7.4</ecNumber>
    </recommendedName>
    <alternativeName>
        <fullName evidence="1">ATP-sulfurylase</fullName>
    </alternativeName>
    <alternativeName>
        <fullName evidence="1">Sulfate adenylate transferase</fullName>
        <shortName evidence="1">SAT</shortName>
    </alternativeName>
</protein>
<accession>Q4WWN8</accession>
<accession>Q96UQ5</accession>
<evidence type="ECO:0000255" key="1">
    <source>
        <dbReference type="HAMAP-Rule" id="MF_03106"/>
    </source>
</evidence>
<evidence type="ECO:0000305" key="2"/>
<sequence length="574" mass="64333">MANPPHGGVLKDLLARDAPRHDELEMEAEKLPAIVLTERQLCDLELIMNGGFSPLEGFMNQKDYDSVCENVRLADGNLFSMPITLDVSQAVIDEGKLKPGSRVTLRDFRDDRNLAILTIDDIYRPDKAKEAKLVFGGDEEHPAIKYLYNKVQEFYVGGKIEAINKLNHYDYVALRYTPAELRVHFDKLGWNRVVAFQTRNPMHRAHRELTVRAARARQANVLIHPVVGLTKPGDIDHFTRVRAYQALLPRYPNGMAVLGLLGLAMRMGGPREAIWHAIIRKNHGATHFIVGRDHAGPGKNSKGQEFYGPYDAQHAVEKYREELGIEVVEFQQVTYLPDTDEYKPKDEVPPGVKTLDISGTELRNRLRTGAPIPEWFSYPEVVKILRESSPPRHTQGFTIFLTGYMNSGKDAIARALQVTLNQQGGRSVSLLLGDTVRHELSSELGFSREDRHTNIQRIAFVAGELTRAGAAVIASPIAPYEESRNAARDAVTQAGGNFFLVHVATPLEYCEKTDKRGIYAKARRGEIKGFTGVDDPYETPSKADLTVDVSKQTVRSIVHEIILMLETEGFFDRS</sequence>
<reference key="1">
    <citation type="journal article" date="2001" name="Arch. Microbiol.">
        <title>Development of a homologous transformation system for the opportunistic human pathogen Aspergillus fumigatus based on the sC gene encoding ATP sulfurylase.</title>
        <authorList>
            <person name="De Lucas J.R."/>
            <person name="Dominguez A.I."/>
            <person name="Mendoza A."/>
            <person name="Higuero Y."/>
            <person name="Romero B."/>
            <person name="Laborda F."/>
        </authorList>
    </citation>
    <scope>NUCLEOTIDE SEQUENCE [GENOMIC DNA]</scope>
    <source>
        <strain>ATCC 46645 / NCPF 2109</strain>
    </source>
</reference>
<reference key="2">
    <citation type="journal article" date="2005" name="Nature">
        <title>Genomic sequence of the pathogenic and allergenic filamentous fungus Aspergillus fumigatus.</title>
        <authorList>
            <person name="Nierman W.C."/>
            <person name="Pain A."/>
            <person name="Anderson M.J."/>
            <person name="Wortman J.R."/>
            <person name="Kim H.S."/>
            <person name="Arroyo J."/>
            <person name="Berriman M."/>
            <person name="Abe K."/>
            <person name="Archer D.B."/>
            <person name="Bermejo C."/>
            <person name="Bennett J.W."/>
            <person name="Bowyer P."/>
            <person name="Chen D."/>
            <person name="Collins M."/>
            <person name="Coulsen R."/>
            <person name="Davies R."/>
            <person name="Dyer P.S."/>
            <person name="Farman M.L."/>
            <person name="Fedorova N."/>
            <person name="Fedorova N.D."/>
            <person name="Feldblyum T.V."/>
            <person name="Fischer R."/>
            <person name="Fosker N."/>
            <person name="Fraser A."/>
            <person name="Garcia J.L."/>
            <person name="Garcia M.J."/>
            <person name="Goble A."/>
            <person name="Goldman G.H."/>
            <person name="Gomi K."/>
            <person name="Griffith-Jones S."/>
            <person name="Gwilliam R."/>
            <person name="Haas B.J."/>
            <person name="Haas H."/>
            <person name="Harris D.E."/>
            <person name="Horiuchi H."/>
            <person name="Huang J."/>
            <person name="Humphray S."/>
            <person name="Jimenez J."/>
            <person name="Keller N."/>
            <person name="Khouri H."/>
            <person name="Kitamoto K."/>
            <person name="Kobayashi T."/>
            <person name="Konzack S."/>
            <person name="Kulkarni R."/>
            <person name="Kumagai T."/>
            <person name="Lafton A."/>
            <person name="Latge J.-P."/>
            <person name="Li W."/>
            <person name="Lord A."/>
            <person name="Lu C."/>
            <person name="Majoros W.H."/>
            <person name="May G.S."/>
            <person name="Miller B.L."/>
            <person name="Mohamoud Y."/>
            <person name="Molina M."/>
            <person name="Monod M."/>
            <person name="Mouyna I."/>
            <person name="Mulligan S."/>
            <person name="Murphy L.D."/>
            <person name="O'Neil S."/>
            <person name="Paulsen I."/>
            <person name="Penalva M.A."/>
            <person name="Pertea M."/>
            <person name="Price C."/>
            <person name="Pritchard B.L."/>
            <person name="Quail M.A."/>
            <person name="Rabbinowitsch E."/>
            <person name="Rawlins N."/>
            <person name="Rajandream M.A."/>
            <person name="Reichard U."/>
            <person name="Renauld H."/>
            <person name="Robson G.D."/>
            <person name="Rodriguez de Cordoba S."/>
            <person name="Rodriguez-Pena J.M."/>
            <person name="Ronning C.M."/>
            <person name="Rutter S."/>
            <person name="Salzberg S.L."/>
            <person name="Sanchez M."/>
            <person name="Sanchez-Ferrero J.C."/>
            <person name="Saunders D."/>
            <person name="Seeger K."/>
            <person name="Squares R."/>
            <person name="Squares S."/>
            <person name="Takeuchi M."/>
            <person name="Tekaia F."/>
            <person name="Turner G."/>
            <person name="Vazquez de Aldana C.R."/>
            <person name="Weidman J."/>
            <person name="White O."/>
            <person name="Woodward J.R."/>
            <person name="Yu J.-H."/>
            <person name="Fraser C.M."/>
            <person name="Galagan J.E."/>
            <person name="Asai K."/>
            <person name="Machida M."/>
            <person name="Hall N."/>
            <person name="Barrell B.G."/>
            <person name="Denning D.W."/>
        </authorList>
    </citation>
    <scope>NUCLEOTIDE SEQUENCE [LARGE SCALE GENOMIC DNA]</scope>
    <source>
        <strain>ATCC MYA-4609 / CBS 101355 / FGSC A1100 / Af293</strain>
    </source>
</reference>
<dbReference type="EC" id="2.7.7.4" evidence="1"/>
<dbReference type="EMBL" id="AJ292542">
    <property type="protein sequence ID" value="CAC82078.1"/>
    <property type="molecule type" value="Genomic_DNA"/>
</dbReference>
<dbReference type="EMBL" id="AAHF01000002">
    <property type="protein sequence ID" value="EAL92915.1"/>
    <property type="molecule type" value="Genomic_DNA"/>
</dbReference>
<dbReference type="RefSeq" id="XP_754953.1">
    <property type="nucleotide sequence ID" value="XM_749860.1"/>
</dbReference>
<dbReference type="SMR" id="Q4WWN8"/>
<dbReference type="FunCoup" id="Q4WWN8">
    <property type="interactions" value="575"/>
</dbReference>
<dbReference type="STRING" id="330879.Q4WWN8"/>
<dbReference type="EnsemblFungi" id="EAL92915">
    <property type="protein sequence ID" value="EAL92915"/>
    <property type="gene ID" value="AFUA_3G06530"/>
</dbReference>
<dbReference type="GeneID" id="3512568"/>
<dbReference type="KEGG" id="afm:AFUA_3G06530"/>
<dbReference type="VEuPathDB" id="FungiDB:Afu3g06530"/>
<dbReference type="eggNOG" id="KOG0636">
    <property type="taxonomic scope" value="Eukaryota"/>
</dbReference>
<dbReference type="HOGENOM" id="CLU_022950_0_0_1"/>
<dbReference type="InParanoid" id="Q4WWN8"/>
<dbReference type="OMA" id="MEMRYAG"/>
<dbReference type="OrthoDB" id="468at2759"/>
<dbReference type="UniPathway" id="UPA00140">
    <property type="reaction ID" value="UER00204"/>
</dbReference>
<dbReference type="Proteomes" id="UP000002530">
    <property type="component" value="Chromosome 3"/>
</dbReference>
<dbReference type="GO" id="GO:0005737">
    <property type="term" value="C:cytoplasm"/>
    <property type="evidence" value="ECO:0007669"/>
    <property type="project" value="UniProtKB-SubCell"/>
</dbReference>
<dbReference type="GO" id="GO:0004020">
    <property type="term" value="F:adenylylsulfate kinase activity"/>
    <property type="evidence" value="ECO:0007669"/>
    <property type="project" value="InterPro"/>
</dbReference>
<dbReference type="GO" id="GO:0005524">
    <property type="term" value="F:ATP binding"/>
    <property type="evidence" value="ECO:0007669"/>
    <property type="project" value="UniProtKB-KW"/>
</dbReference>
<dbReference type="GO" id="GO:0004781">
    <property type="term" value="F:sulfate adenylyltransferase (ATP) activity"/>
    <property type="evidence" value="ECO:0000318"/>
    <property type="project" value="GO_Central"/>
</dbReference>
<dbReference type="GO" id="GO:0019344">
    <property type="term" value="P:cysteine biosynthetic process"/>
    <property type="evidence" value="ECO:0007669"/>
    <property type="project" value="UniProtKB-KW"/>
</dbReference>
<dbReference type="GO" id="GO:0070814">
    <property type="term" value="P:hydrogen sulfide biosynthetic process"/>
    <property type="evidence" value="ECO:0007669"/>
    <property type="project" value="UniProtKB-UniRule"/>
</dbReference>
<dbReference type="GO" id="GO:0009086">
    <property type="term" value="P:methionine biosynthetic process"/>
    <property type="evidence" value="ECO:0007669"/>
    <property type="project" value="UniProtKB-KW"/>
</dbReference>
<dbReference type="GO" id="GO:0019379">
    <property type="term" value="P:sulfate assimilation, phosphoadenylyl sulfate reduction by phosphoadenylyl-sulfate reductase (thioredoxin)"/>
    <property type="evidence" value="ECO:0000318"/>
    <property type="project" value="GO_Central"/>
</dbReference>
<dbReference type="CDD" id="cd02027">
    <property type="entry name" value="APSK"/>
    <property type="match status" value="1"/>
</dbReference>
<dbReference type="CDD" id="cd00517">
    <property type="entry name" value="ATPS"/>
    <property type="match status" value="1"/>
</dbReference>
<dbReference type="FunFam" id="3.10.400.10:FF:000003">
    <property type="entry name" value="Sulfate adenylyltransferase"/>
    <property type="match status" value="1"/>
</dbReference>
<dbReference type="FunFam" id="3.40.50.300:FF:000802">
    <property type="entry name" value="Sulfate adenylyltransferase"/>
    <property type="match status" value="1"/>
</dbReference>
<dbReference type="FunFam" id="3.40.50.620:FF:000052">
    <property type="entry name" value="Sulfate adenylyltransferase"/>
    <property type="match status" value="1"/>
</dbReference>
<dbReference type="Gene3D" id="3.40.50.620">
    <property type="entry name" value="HUPs"/>
    <property type="match status" value="1"/>
</dbReference>
<dbReference type="Gene3D" id="3.40.50.300">
    <property type="entry name" value="P-loop containing nucleotide triphosphate hydrolases"/>
    <property type="match status" value="1"/>
</dbReference>
<dbReference type="Gene3D" id="3.10.400.10">
    <property type="entry name" value="Sulfate adenylyltransferase"/>
    <property type="match status" value="1"/>
</dbReference>
<dbReference type="HAMAP" id="MF_03106">
    <property type="entry name" value="Sulf_adenylyltr_euk"/>
    <property type="match status" value="1"/>
</dbReference>
<dbReference type="InterPro" id="IPR002891">
    <property type="entry name" value="APS_kinase"/>
</dbReference>
<dbReference type="InterPro" id="IPR025980">
    <property type="entry name" value="ATP-Sase_PUA-like_dom"/>
</dbReference>
<dbReference type="InterPro" id="IPR027417">
    <property type="entry name" value="P-loop_NTPase"/>
</dbReference>
<dbReference type="InterPro" id="IPR015947">
    <property type="entry name" value="PUA-like_sf"/>
</dbReference>
<dbReference type="InterPro" id="IPR014729">
    <property type="entry name" value="Rossmann-like_a/b/a_fold"/>
</dbReference>
<dbReference type="InterPro" id="IPR027535">
    <property type="entry name" value="Sulf_adenylyltr_euk"/>
</dbReference>
<dbReference type="InterPro" id="IPR050512">
    <property type="entry name" value="Sulf_AdTrans/APS_kinase"/>
</dbReference>
<dbReference type="InterPro" id="IPR024951">
    <property type="entry name" value="Sulfurylase_cat_dom"/>
</dbReference>
<dbReference type="InterPro" id="IPR002650">
    <property type="entry name" value="Sulphate_adenylyltransferase"/>
</dbReference>
<dbReference type="NCBIfam" id="TIGR00455">
    <property type="entry name" value="apsK"/>
    <property type="match status" value="1"/>
</dbReference>
<dbReference type="NCBIfam" id="NF004040">
    <property type="entry name" value="PRK05537.1"/>
    <property type="match status" value="1"/>
</dbReference>
<dbReference type="NCBIfam" id="TIGR00339">
    <property type="entry name" value="sopT"/>
    <property type="match status" value="1"/>
</dbReference>
<dbReference type="PANTHER" id="PTHR42700">
    <property type="entry name" value="SULFATE ADENYLYLTRANSFERASE"/>
    <property type="match status" value="1"/>
</dbReference>
<dbReference type="PANTHER" id="PTHR42700:SF1">
    <property type="entry name" value="SULFATE ADENYLYLTRANSFERASE"/>
    <property type="match status" value="1"/>
</dbReference>
<dbReference type="Pfam" id="PF01583">
    <property type="entry name" value="APS_kinase"/>
    <property type="match status" value="1"/>
</dbReference>
<dbReference type="Pfam" id="PF01747">
    <property type="entry name" value="ATP-sulfurylase"/>
    <property type="match status" value="1"/>
</dbReference>
<dbReference type="Pfam" id="PF14306">
    <property type="entry name" value="PUA_2"/>
    <property type="match status" value="1"/>
</dbReference>
<dbReference type="SUPFAM" id="SSF52374">
    <property type="entry name" value="Nucleotidylyl transferase"/>
    <property type="match status" value="1"/>
</dbReference>
<dbReference type="SUPFAM" id="SSF52540">
    <property type="entry name" value="P-loop containing nucleoside triphosphate hydrolases"/>
    <property type="match status" value="1"/>
</dbReference>
<dbReference type="SUPFAM" id="SSF88697">
    <property type="entry name" value="PUA domain-like"/>
    <property type="match status" value="1"/>
</dbReference>
<gene>
    <name evidence="1" type="primary">met3</name>
    <name type="synonym">sC</name>
    <name type="ORF">AFUA_3G06530</name>
</gene>
<name>MET3_ASPFU</name>
<feature type="chain" id="PRO_0000283677" description="Sulfate adenylyltransferase">
    <location>
        <begin position="1"/>
        <end position="574"/>
    </location>
</feature>
<feature type="region of interest" description="N-terminal" evidence="1">
    <location>
        <begin position="1"/>
        <end position="169"/>
    </location>
</feature>
<feature type="region of interest" description="Catalytic" evidence="1">
    <location>
        <begin position="170"/>
        <end position="394"/>
    </location>
</feature>
<feature type="region of interest" description="Allosteric regulation domain; adenylyl-sulfate kinase-like" evidence="1">
    <location>
        <begin position="395"/>
        <end position="574"/>
    </location>
</feature>
<feature type="active site" evidence="1">
    <location>
        <position position="198"/>
    </location>
</feature>
<feature type="active site" evidence="1">
    <location>
        <position position="199"/>
    </location>
</feature>
<feature type="active site" evidence="1">
    <location>
        <position position="200"/>
    </location>
</feature>
<feature type="binding site" evidence="1">
    <location>
        <begin position="197"/>
        <end position="200"/>
    </location>
    <ligand>
        <name>ATP</name>
        <dbReference type="ChEBI" id="CHEBI:30616"/>
    </ligand>
</feature>
<feature type="binding site" evidence="1">
    <location>
        <position position="197"/>
    </location>
    <ligand>
        <name>sulfate</name>
        <dbReference type="ChEBI" id="CHEBI:16189"/>
    </ligand>
</feature>
<feature type="binding site" evidence="1">
    <location>
        <position position="199"/>
    </location>
    <ligand>
        <name>sulfate</name>
        <dbReference type="ChEBI" id="CHEBI:16189"/>
    </ligand>
</feature>
<feature type="binding site" evidence="1">
    <location>
        <begin position="291"/>
        <end position="294"/>
    </location>
    <ligand>
        <name>ATP</name>
        <dbReference type="ChEBI" id="CHEBI:30616"/>
    </ligand>
</feature>
<feature type="binding site" evidence="1">
    <location>
        <position position="295"/>
    </location>
    <ligand>
        <name>sulfate</name>
        <dbReference type="ChEBI" id="CHEBI:16189"/>
    </ligand>
</feature>
<feature type="binding site" evidence="1">
    <location>
        <position position="333"/>
    </location>
    <ligand>
        <name>ATP</name>
        <dbReference type="ChEBI" id="CHEBI:30616"/>
    </ligand>
</feature>
<feature type="binding site" evidence="1">
    <location>
        <begin position="434"/>
        <end position="437"/>
    </location>
    <ligand>
        <name>3'-phosphoadenylyl sulfate</name>
        <dbReference type="ChEBI" id="CHEBI:58339"/>
        <note>allosteric inhibitor</note>
    </ligand>
</feature>
<feature type="binding site" evidence="1">
    <location>
        <position position="451"/>
    </location>
    <ligand>
        <name>3'-phosphoadenylyl sulfate</name>
        <dbReference type="ChEBI" id="CHEBI:58339"/>
        <note>allosteric inhibitor</note>
    </ligand>
</feature>
<feature type="binding site" evidence="1">
    <location>
        <begin position="477"/>
        <end position="478"/>
    </location>
    <ligand>
        <name>3'-phosphoadenylyl sulfate</name>
        <dbReference type="ChEBI" id="CHEBI:58339"/>
        <note>allosteric inhibitor</note>
    </ligand>
</feature>
<feature type="binding site" evidence="1">
    <location>
        <position position="516"/>
    </location>
    <ligand>
        <name>3'-phosphoadenylyl sulfate</name>
        <dbReference type="ChEBI" id="CHEBI:58339"/>
        <note>allosteric inhibitor</note>
    </ligand>
</feature>
<feature type="site" description="Transition state stabilizer" evidence="1">
    <location>
        <position position="203"/>
    </location>
</feature>
<feature type="site" description="Transition state stabilizer" evidence="1">
    <location>
        <position position="206"/>
    </location>
</feature>
<feature type="site" description="Induces change in substrate recognition on ATP binding" evidence="1">
    <location>
        <position position="330"/>
    </location>
</feature>
<feature type="sequence conflict" description="In Ref. 1; CAC82078." evidence="2" ref="1">
    <original>KD</original>
    <variation>RT</variation>
    <location>
        <begin position="11"/>
        <end position="12"/>
    </location>
</feature>
<feature type="sequence conflict" description="In Ref. 1; CAC82078." evidence="2" ref="1">
    <original>G</original>
    <variation>A</variation>
    <location>
        <position position="189"/>
    </location>
</feature>
<feature type="sequence conflict" description="In Ref. 1; CAC82078." evidence="2" ref="1">
    <original>R</original>
    <variation>K</variation>
    <location>
        <position position="204"/>
    </location>
</feature>
<feature type="sequence conflict" description="In Ref. 1; CAC82078." evidence="2" ref="1">
    <original>T</original>
    <variation>N</variation>
    <location>
        <position position="230"/>
    </location>
</feature>
<feature type="sequence conflict" description="In Ref. 1; CAC82078." evidence="2" ref="1">
    <original>T</original>
    <variation>N</variation>
    <location>
        <position position="398"/>
    </location>
</feature>
<feature type="sequence conflict" description="In Ref. 1; CAC82078." evidence="2" ref="1">
    <original>I</original>
    <variation>V</variation>
    <location>
        <position position="562"/>
    </location>
</feature>
<organism>
    <name type="scientific">Aspergillus fumigatus (strain ATCC MYA-4609 / CBS 101355 / FGSC A1100 / Af293)</name>
    <name type="common">Neosartorya fumigata</name>
    <dbReference type="NCBI Taxonomy" id="330879"/>
    <lineage>
        <taxon>Eukaryota</taxon>
        <taxon>Fungi</taxon>
        <taxon>Dikarya</taxon>
        <taxon>Ascomycota</taxon>
        <taxon>Pezizomycotina</taxon>
        <taxon>Eurotiomycetes</taxon>
        <taxon>Eurotiomycetidae</taxon>
        <taxon>Eurotiales</taxon>
        <taxon>Aspergillaceae</taxon>
        <taxon>Aspergillus</taxon>
        <taxon>Aspergillus subgen. Fumigati</taxon>
    </lineage>
</organism>
<proteinExistence type="inferred from homology"/>